<comment type="catalytic activity">
    <reaction evidence="1">
        <text>tRNA(Cys) + L-cysteine + ATP = L-cysteinyl-tRNA(Cys) + AMP + diphosphate</text>
        <dbReference type="Rhea" id="RHEA:17773"/>
        <dbReference type="Rhea" id="RHEA-COMP:9661"/>
        <dbReference type="Rhea" id="RHEA-COMP:9679"/>
        <dbReference type="ChEBI" id="CHEBI:30616"/>
        <dbReference type="ChEBI" id="CHEBI:33019"/>
        <dbReference type="ChEBI" id="CHEBI:35235"/>
        <dbReference type="ChEBI" id="CHEBI:78442"/>
        <dbReference type="ChEBI" id="CHEBI:78517"/>
        <dbReference type="ChEBI" id="CHEBI:456215"/>
        <dbReference type="EC" id="6.1.1.16"/>
    </reaction>
</comment>
<comment type="cofactor">
    <cofactor evidence="1">
        <name>Zn(2+)</name>
        <dbReference type="ChEBI" id="CHEBI:29105"/>
    </cofactor>
    <text evidence="1">Binds 1 zinc ion per subunit.</text>
</comment>
<comment type="subunit">
    <text evidence="1">Monomer.</text>
</comment>
<comment type="subcellular location">
    <subcellularLocation>
        <location evidence="1">Cytoplasm</location>
    </subcellularLocation>
</comment>
<comment type="similarity">
    <text evidence="1">Belongs to the class-I aminoacyl-tRNA synthetase family.</text>
</comment>
<gene>
    <name evidence="1" type="primary">cysS</name>
    <name type="ordered locus">SG0705</name>
</gene>
<protein>
    <recommendedName>
        <fullName evidence="1">Cysteine--tRNA ligase</fullName>
        <ecNumber evidence="1">6.1.1.16</ecNumber>
    </recommendedName>
    <alternativeName>
        <fullName evidence="1">Cysteinyl-tRNA synthetase</fullName>
        <shortName evidence="1">CysRS</shortName>
    </alternativeName>
</protein>
<organism>
    <name type="scientific">Sodalis glossinidius (strain morsitans)</name>
    <dbReference type="NCBI Taxonomy" id="343509"/>
    <lineage>
        <taxon>Bacteria</taxon>
        <taxon>Pseudomonadati</taxon>
        <taxon>Pseudomonadota</taxon>
        <taxon>Gammaproteobacteria</taxon>
        <taxon>Enterobacterales</taxon>
        <taxon>Bruguierivoracaceae</taxon>
        <taxon>Sodalis</taxon>
    </lineage>
</organism>
<dbReference type="EC" id="6.1.1.16" evidence="1"/>
<dbReference type="EMBL" id="AP008232">
    <property type="protein sequence ID" value="BAE73980.1"/>
    <property type="molecule type" value="Genomic_DNA"/>
</dbReference>
<dbReference type="RefSeq" id="WP_011410568.1">
    <property type="nucleotide sequence ID" value="NC_007712.1"/>
</dbReference>
<dbReference type="SMR" id="Q2NV45"/>
<dbReference type="STRING" id="343509.SG0705"/>
<dbReference type="KEGG" id="sgl:SG0705"/>
<dbReference type="eggNOG" id="COG0215">
    <property type="taxonomic scope" value="Bacteria"/>
</dbReference>
<dbReference type="HOGENOM" id="CLU_013528_0_1_6"/>
<dbReference type="OrthoDB" id="9815130at2"/>
<dbReference type="BioCyc" id="SGLO343509:SGP1_RS05985-MONOMER"/>
<dbReference type="Proteomes" id="UP000001932">
    <property type="component" value="Chromosome"/>
</dbReference>
<dbReference type="GO" id="GO:0005829">
    <property type="term" value="C:cytosol"/>
    <property type="evidence" value="ECO:0007669"/>
    <property type="project" value="TreeGrafter"/>
</dbReference>
<dbReference type="GO" id="GO:0005524">
    <property type="term" value="F:ATP binding"/>
    <property type="evidence" value="ECO:0007669"/>
    <property type="project" value="UniProtKB-UniRule"/>
</dbReference>
<dbReference type="GO" id="GO:0004817">
    <property type="term" value="F:cysteine-tRNA ligase activity"/>
    <property type="evidence" value="ECO:0007669"/>
    <property type="project" value="UniProtKB-UniRule"/>
</dbReference>
<dbReference type="GO" id="GO:0008270">
    <property type="term" value="F:zinc ion binding"/>
    <property type="evidence" value="ECO:0007669"/>
    <property type="project" value="UniProtKB-UniRule"/>
</dbReference>
<dbReference type="GO" id="GO:0006423">
    <property type="term" value="P:cysteinyl-tRNA aminoacylation"/>
    <property type="evidence" value="ECO:0007669"/>
    <property type="project" value="UniProtKB-UniRule"/>
</dbReference>
<dbReference type="CDD" id="cd07963">
    <property type="entry name" value="Anticodon_Ia_Cys"/>
    <property type="match status" value="1"/>
</dbReference>
<dbReference type="CDD" id="cd00672">
    <property type="entry name" value="CysRS_core"/>
    <property type="match status" value="1"/>
</dbReference>
<dbReference type="FunFam" id="1.20.120.1910:FF:000001">
    <property type="entry name" value="Cysteine--tRNA ligase"/>
    <property type="match status" value="1"/>
</dbReference>
<dbReference type="FunFam" id="3.40.50.620:FF:000009">
    <property type="entry name" value="Cysteine--tRNA ligase"/>
    <property type="match status" value="1"/>
</dbReference>
<dbReference type="Gene3D" id="1.20.120.1910">
    <property type="entry name" value="Cysteine-tRNA ligase, C-terminal anti-codon recognition domain"/>
    <property type="match status" value="1"/>
</dbReference>
<dbReference type="Gene3D" id="3.40.50.620">
    <property type="entry name" value="HUPs"/>
    <property type="match status" value="1"/>
</dbReference>
<dbReference type="HAMAP" id="MF_00041">
    <property type="entry name" value="Cys_tRNA_synth"/>
    <property type="match status" value="1"/>
</dbReference>
<dbReference type="InterPro" id="IPR015803">
    <property type="entry name" value="Cys-tRNA-ligase"/>
</dbReference>
<dbReference type="InterPro" id="IPR015273">
    <property type="entry name" value="Cys-tRNA-synt_Ia_DALR"/>
</dbReference>
<dbReference type="InterPro" id="IPR024909">
    <property type="entry name" value="Cys-tRNA/MSH_ligase"/>
</dbReference>
<dbReference type="InterPro" id="IPR056411">
    <property type="entry name" value="CysS_C"/>
</dbReference>
<dbReference type="InterPro" id="IPR014729">
    <property type="entry name" value="Rossmann-like_a/b/a_fold"/>
</dbReference>
<dbReference type="InterPro" id="IPR032678">
    <property type="entry name" value="tRNA-synt_1_cat_dom"/>
</dbReference>
<dbReference type="InterPro" id="IPR009080">
    <property type="entry name" value="tRNAsynth_Ia_anticodon-bd"/>
</dbReference>
<dbReference type="NCBIfam" id="TIGR00435">
    <property type="entry name" value="cysS"/>
    <property type="match status" value="1"/>
</dbReference>
<dbReference type="PANTHER" id="PTHR10890:SF3">
    <property type="entry name" value="CYSTEINE--TRNA LIGASE, CYTOPLASMIC"/>
    <property type="match status" value="1"/>
</dbReference>
<dbReference type="PANTHER" id="PTHR10890">
    <property type="entry name" value="CYSTEINYL-TRNA SYNTHETASE"/>
    <property type="match status" value="1"/>
</dbReference>
<dbReference type="Pfam" id="PF23493">
    <property type="entry name" value="CysS_C"/>
    <property type="match status" value="1"/>
</dbReference>
<dbReference type="Pfam" id="PF09190">
    <property type="entry name" value="DALR_2"/>
    <property type="match status" value="1"/>
</dbReference>
<dbReference type="Pfam" id="PF01406">
    <property type="entry name" value="tRNA-synt_1e"/>
    <property type="match status" value="1"/>
</dbReference>
<dbReference type="PRINTS" id="PR00983">
    <property type="entry name" value="TRNASYNTHCYS"/>
</dbReference>
<dbReference type="SMART" id="SM00840">
    <property type="entry name" value="DALR_2"/>
    <property type="match status" value="1"/>
</dbReference>
<dbReference type="SUPFAM" id="SSF47323">
    <property type="entry name" value="Anticodon-binding domain of a subclass of class I aminoacyl-tRNA synthetases"/>
    <property type="match status" value="1"/>
</dbReference>
<dbReference type="SUPFAM" id="SSF52374">
    <property type="entry name" value="Nucleotidylyl transferase"/>
    <property type="match status" value="1"/>
</dbReference>
<name>SYC_SODGM</name>
<sequence>MLKIFNTLTRQKEEFKPIHAGKVGMYVCGITVYDLCHIGHGRTFVAFDVVTRYLRYRGYEVNYVRNITDIEDKIIRRAAENGETFHQLTERMISEMHSDFDQLNILRPDQEPRATHYIDAIIELVGQLIDRDHAYVAANGDVMFAVDSDSDYGLLSRQDLEQLQAGARVEVADVKRNPMDFVLWKMSKPGEPSWPSPWGDGRPGWHIECSAMNGRQLGHHFDIHGGGSDLIFPHHENEIAQSTCAHDGPYVNVWMHAGMVMVDREKMSKSLGNFFTVRDVLRYYDAETVRYFLMSGHYRSQLNYSEENLKQARSALERLYIALRGTDATAVPAGGDHFVAQFIAAMDDDFNTPKAYSVLFDIAREVNRLKSEQPAAQGMAATLRQLAGVLGLLEQEPAAFLQQGAAEDNVMIEALIQQRNDARKARQWALADEARDKLTALGIVLEDGPQGTTWRRC</sequence>
<feature type="chain" id="PRO_0000240957" description="Cysteine--tRNA ligase">
    <location>
        <begin position="1"/>
        <end position="457"/>
    </location>
</feature>
<feature type="short sequence motif" description="'HIGH' region">
    <location>
        <begin position="30"/>
        <end position="40"/>
    </location>
</feature>
<feature type="short sequence motif" description="'KMSKS' region">
    <location>
        <begin position="266"/>
        <end position="270"/>
    </location>
</feature>
<feature type="binding site" evidence="1">
    <location>
        <position position="28"/>
    </location>
    <ligand>
        <name>Zn(2+)</name>
        <dbReference type="ChEBI" id="CHEBI:29105"/>
    </ligand>
</feature>
<feature type="binding site" evidence="1">
    <location>
        <position position="209"/>
    </location>
    <ligand>
        <name>Zn(2+)</name>
        <dbReference type="ChEBI" id="CHEBI:29105"/>
    </ligand>
</feature>
<feature type="binding site" evidence="1">
    <location>
        <position position="234"/>
    </location>
    <ligand>
        <name>Zn(2+)</name>
        <dbReference type="ChEBI" id="CHEBI:29105"/>
    </ligand>
</feature>
<feature type="binding site" evidence="1">
    <location>
        <position position="238"/>
    </location>
    <ligand>
        <name>Zn(2+)</name>
        <dbReference type="ChEBI" id="CHEBI:29105"/>
    </ligand>
</feature>
<feature type="binding site" evidence="1">
    <location>
        <position position="269"/>
    </location>
    <ligand>
        <name>ATP</name>
        <dbReference type="ChEBI" id="CHEBI:30616"/>
    </ligand>
</feature>
<evidence type="ECO:0000255" key="1">
    <source>
        <dbReference type="HAMAP-Rule" id="MF_00041"/>
    </source>
</evidence>
<accession>Q2NV45</accession>
<reference key="1">
    <citation type="journal article" date="2006" name="Genome Res.">
        <title>Massive genome erosion and functional adaptations provide insights into the symbiotic lifestyle of Sodalis glossinidius in the tsetse host.</title>
        <authorList>
            <person name="Toh H."/>
            <person name="Weiss B.L."/>
            <person name="Perkin S.A.H."/>
            <person name="Yamashita A."/>
            <person name="Oshima K."/>
            <person name="Hattori M."/>
            <person name="Aksoy S."/>
        </authorList>
    </citation>
    <scope>NUCLEOTIDE SEQUENCE [LARGE SCALE GENOMIC DNA]</scope>
    <source>
        <strain>morsitans</strain>
    </source>
</reference>
<proteinExistence type="inferred from homology"/>
<keyword id="KW-0030">Aminoacyl-tRNA synthetase</keyword>
<keyword id="KW-0067">ATP-binding</keyword>
<keyword id="KW-0963">Cytoplasm</keyword>
<keyword id="KW-0436">Ligase</keyword>
<keyword id="KW-0479">Metal-binding</keyword>
<keyword id="KW-0547">Nucleotide-binding</keyword>
<keyword id="KW-0648">Protein biosynthesis</keyword>
<keyword id="KW-0862">Zinc</keyword>